<comment type="function">
    <text>Probable ion channel inhibitor.</text>
</comment>
<comment type="subcellular location">
    <subcellularLocation>
        <location>Secreted</location>
    </subcellularLocation>
</comment>
<comment type="tissue specificity">
    <text>Expressed by the venom gland.</text>
</comment>
<comment type="domain">
    <text evidence="1">The presence of a 'disulfide through disulfide knot' structurally defines this protein as a knottin.</text>
</comment>
<comment type="similarity">
    <text evidence="4">Belongs to the neurotoxin 10 (Hwtx-1) family. 66 (Jztx-24) subfamily.</text>
</comment>
<accession>B1P1F0</accession>
<evidence type="ECO:0000250" key="1"/>
<evidence type="ECO:0000255" key="2"/>
<evidence type="ECO:0000269" key="3">
    <source>
    </source>
</evidence>
<evidence type="ECO:0000305" key="4"/>
<proteinExistence type="evidence at protein level"/>
<keyword id="KW-0027">Amidation</keyword>
<keyword id="KW-0903">Direct protein sequencing</keyword>
<keyword id="KW-1015">Disulfide bond</keyword>
<keyword id="KW-0872">Ion channel impairing toxin</keyword>
<keyword id="KW-0960">Knottin</keyword>
<keyword id="KW-0964">Secreted</keyword>
<keyword id="KW-0732">Signal</keyword>
<keyword id="KW-0800">Toxin</keyword>
<feature type="signal peptide" evidence="2">
    <location>
        <begin position="1"/>
        <end position="21"/>
    </location>
</feature>
<feature type="propeptide" id="PRO_0000398449" evidence="3">
    <location>
        <begin position="22"/>
        <end position="49"/>
    </location>
</feature>
<feature type="peptide" id="PRO_0000398450" description="U15-theraphotoxin-Cg1a">
    <location>
        <begin position="50"/>
        <end position="81"/>
    </location>
</feature>
<feature type="modified residue" description="Alanine amide" evidence="3">
    <location>
        <position position="81"/>
    </location>
</feature>
<feature type="disulfide bond" evidence="1">
    <location>
        <begin position="51"/>
        <end position="66"/>
    </location>
</feature>
<feature type="disulfide bond" evidence="1">
    <location>
        <begin position="58"/>
        <end position="71"/>
    </location>
</feature>
<feature type="disulfide bond" evidence="1">
    <location>
        <begin position="65"/>
        <end position="77"/>
    </location>
</feature>
<protein>
    <recommendedName>
        <fullName>U15-theraphotoxin-Cg1a</fullName>
        <shortName>U15-TRTX-Cg1a</shortName>
    </recommendedName>
    <alternativeName>
        <fullName>Jingzhaotoxin-24</fullName>
        <shortName>JZTX-24</shortName>
    </alternativeName>
    <alternativeName>
        <fullName>Peptide F5-8.99</fullName>
    </alternativeName>
</protein>
<dbReference type="EMBL" id="EU233881">
    <property type="protein sequence ID" value="ABY71700.1"/>
    <property type="molecule type" value="mRNA"/>
</dbReference>
<dbReference type="SMR" id="B1P1F0"/>
<dbReference type="ArachnoServer" id="AS000829">
    <property type="toxin name" value="U15-theraphotoxin-Cg1a"/>
</dbReference>
<dbReference type="GO" id="GO:0005576">
    <property type="term" value="C:extracellular region"/>
    <property type="evidence" value="ECO:0007669"/>
    <property type="project" value="UniProtKB-SubCell"/>
</dbReference>
<dbReference type="GO" id="GO:0099106">
    <property type="term" value="F:ion channel regulator activity"/>
    <property type="evidence" value="ECO:0007669"/>
    <property type="project" value="UniProtKB-KW"/>
</dbReference>
<dbReference type="GO" id="GO:0090729">
    <property type="term" value="F:toxin activity"/>
    <property type="evidence" value="ECO:0007669"/>
    <property type="project" value="UniProtKB-KW"/>
</dbReference>
<organism>
    <name type="scientific">Chilobrachys guangxiensis</name>
    <name type="common">Chinese earth tiger tarantula</name>
    <name type="synonym">Chilobrachys jingzhao</name>
    <dbReference type="NCBI Taxonomy" id="278060"/>
    <lineage>
        <taxon>Eukaryota</taxon>
        <taxon>Metazoa</taxon>
        <taxon>Ecdysozoa</taxon>
        <taxon>Arthropoda</taxon>
        <taxon>Chelicerata</taxon>
        <taxon>Arachnida</taxon>
        <taxon>Araneae</taxon>
        <taxon>Mygalomorphae</taxon>
        <taxon>Theraphosidae</taxon>
        <taxon>Chilobrachys</taxon>
    </lineage>
</organism>
<name>JZT24_CHIGU</name>
<reference key="1">
    <citation type="journal article" date="2008" name="Cell. Mol. Life Sci.">
        <title>Molecular diversity and evolution of cystine knot toxins of the tarantula Chilobrachys jingzhao.</title>
        <authorList>
            <person name="Chen J."/>
            <person name="Deng M."/>
            <person name="He Q."/>
            <person name="Meng E."/>
            <person name="Jiang L."/>
            <person name="Liao Z."/>
            <person name="Rong M."/>
            <person name="Liang S."/>
        </authorList>
    </citation>
    <scope>NUCLEOTIDE SEQUENCE [LARGE SCALE MRNA]</scope>
    <source>
        <tissue>Venom gland</tissue>
    </source>
</reference>
<reference key="2">
    <citation type="journal article" date="2007" name="Proteomics">
        <title>Proteomic and peptidomic analysis of the venom from Chinese tarantula Chilobrachys jingzhao.</title>
        <authorList>
            <person name="Liao Z."/>
            <person name="Cao J."/>
            <person name="Li S."/>
            <person name="Yan X."/>
            <person name="Hu W."/>
            <person name="He Q."/>
            <person name="Chen J."/>
            <person name="Tang J."/>
            <person name="Xie J."/>
            <person name="Liang S."/>
        </authorList>
    </citation>
    <scope>PROTEIN SEQUENCE OF 50-81</scope>
    <scope>IDENTIFICATION BY MASS SPECTROMETRY</scope>
    <scope>AMIDATION AT ALA-81</scope>
    <source>
        <tissue>Venom</tissue>
    </source>
</reference>
<sequence length="83" mass="9199">MKAAILLAFAGLALLSVICHASENVEQDSFEEVFSAIFAMEDDLKPKERVCRGYGLPCTPEKNDCCQRLYCSQHRLCSVKAGK</sequence>